<proteinExistence type="inferred from homology"/>
<reference key="1">
    <citation type="journal article" date="2001" name="Science">
        <title>Comparative genomics of Listeria species.</title>
        <authorList>
            <person name="Glaser P."/>
            <person name="Frangeul L."/>
            <person name="Buchrieser C."/>
            <person name="Rusniok C."/>
            <person name="Amend A."/>
            <person name="Baquero F."/>
            <person name="Berche P."/>
            <person name="Bloecker H."/>
            <person name="Brandt P."/>
            <person name="Chakraborty T."/>
            <person name="Charbit A."/>
            <person name="Chetouani F."/>
            <person name="Couve E."/>
            <person name="de Daruvar A."/>
            <person name="Dehoux P."/>
            <person name="Domann E."/>
            <person name="Dominguez-Bernal G."/>
            <person name="Duchaud E."/>
            <person name="Durant L."/>
            <person name="Dussurget O."/>
            <person name="Entian K.-D."/>
            <person name="Fsihi H."/>
            <person name="Garcia-del Portillo F."/>
            <person name="Garrido P."/>
            <person name="Gautier L."/>
            <person name="Goebel W."/>
            <person name="Gomez-Lopez N."/>
            <person name="Hain T."/>
            <person name="Hauf J."/>
            <person name="Jackson D."/>
            <person name="Jones L.-M."/>
            <person name="Kaerst U."/>
            <person name="Kreft J."/>
            <person name="Kuhn M."/>
            <person name="Kunst F."/>
            <person name="Kurapkat G."/>
            <person name="Madueno E."/>
            <person name="Maitournam A."/>
            <person name="Mata Vicente J."/>
            <person name="Ng E."/>
            <person name="Nedjari H."/>
            <person name="Nordsiek G."/>
            <person name="Novella S."/>
            <person name="de Pablos B."/>
            <person name="Perez-Diaz J.-C."/>
            <person name="Purcell R."/>
            <person name="Remmel B."/>
            <person name="Rose M."/>
            <person name="Schlueter T."/>
            <person name="Simoes N."/>
            <person name="Tierrez A."/>
            <person name="Vazquez-Boland J.-A."/>
            <person name="Voss H."/>
            <person name="Wehland J."/>
            <person name="Cossart P."/>
        </authorList>
    </citation>
    <scope>NUCLEOTIDE SEQUENCE [LARGE SCALE GENOMIC DNA]</scope>
    <source>
        <strain>ATCC BAA-679 / EGD-e</strain>
    </source>
</reference>
<feature type="chain" id="PRO_0000166343" description="FMN-dependent NADH:quinone oxidoreductase 2">
    <location>
        <begin position="1"/>
        <end position="211"/>
    </location>
</feature>
<feature type="binding site" evidence="1">
    <location>
        <position position="10"/>
    </location>
    <ligand>
        <name>FMN</name>
        <dbReference type="ChEBI" id="CHEBI:58210"/>
    </ligand>
</feature>
<feature type="binding site" evidence="1">
    <location>
        <begin position="17"/>
        <end position="19"/>
    </location>
    <ligand>
        <name>FMN</name>
        <dbReference type="ChEBI" id="CHEBI:58210"/>
    </ligand>
</feature>
<gene>
    <name evidence="1" type="primary">azoR2</name>
    <name type="ordered locus">lmo0786</name>
</gene>
<sequence>MSKVLFIKASPLPNEVSRSSQVAETFMAEYKAKNPSDTVEELVLYNTEVPLLDLELMTAGRELQAGKAFTDLAPDVQKKLNAYNALTEQFLAADKYVFVFPLWNLGIPPLLKAYIDTFVIAGKSFRYTEHGPEALLKDKKAILIHGSGGIYSAGPTSSFTHGEPYLRTILQFIGINVVPSIFVEGIDHNPSKEAEIVAAAKAVAQESATEF</sequence>
<accession>Q8Y8V6</accession>
<organism>
    <name type="scientific">Listeria monocytogenes serovar 1/2a (strain ATCC BAA-679 / EGD-e)</name>
    <dbReference type="NCBI Taxonomy" id="169963"/>
    <lineage>
        <taxon>Bacteria</taxon>
        <taxon>Bacillati</taxon>
        <taxon>Bacillota</taxon>
        <taxon>Bacilli</taxon>
        <taxon>Bacillales</taxon>
        <taxon>Listeriaceae</taxon>
        <taxon>Listeria</taxon>
    </lineage>
</organism>
<evidence type="ECO:0000255" key="1">
    <source>
        <dbReference type="HAMAP-Rule" id="MF_01216"/>
    </source>
</evidence>
<keyword id="KW-0285">Flavoprotein</keyword>
<keyword id="KW-0288">FMN</keyword>
<keyword id="KW-0520">NAD</keyword>
<keyword id="KW-0560">Oxidoreductase</keyword>
<keyword id="KW-1185">Reference proteome</keyword>
<comment type="function">
    <text evidence="1">Quinone reductase that provides resistance to thiol-specific stress caused by electrophilic quinones.</text>
</comment>
<comment type="function">
    <text evidence="1">Also exhibits azoreductase activity. Catalyzes the reductive cleavage of the azo bond in aromatic azo compounds to the corresponding amines.</text>
</comment>
<comment type="catalytic activity">
    <reaction evidence="1">
        <text>2 a quinone + NADH + H(+) = 2 a 1,4-benzosemiquinone + NAD(+)</text>
        <dbReference type="Rhea" id="RHEA:65952"/>
        <dbReference type="ChEBI" id="CHEBI:15378"/>
        <dbReference type="ChEBI" id="CHEBI:57540"/>
        <dbReference type="ChEBI" id="CHEBI:57945"/>
        <dbReference type="ChEBI" id="CHEBI:132124"/>
        <dbReference type="ChEBI" id="CHEBI:134225"/>
    </reaction>
</comment>
<comment type="catalytic activity">
    <reaction evidence="1">
        <text>N,N-dimethyl-1,4-phenylenediamine + anthranilate + 2 NAD(+) = 2-(4-dimethylaminophenyl)diazenylbenzoate + 2 NADH + 2 H(+)</text>
        <dbReference type="Rhea" id="RHEA:55872"/>
        <dbReference type="ChEBI" id="CHEBI:15378"/>
        <dbReference type="ChEBI" id="CHEBI:15783"/>
        <dbReference type="ChEBI" id="CHEBI:16567"/>
        <dbReference type="ChEBI" id="CHEBI:57540"/>
        <dbReference type="ChEBI" id="CHEBI:57945"/>
        <dbReference type="ChEBI" id="CHEBI:71579"/>
        <dbReference type="EC" id="1.7.1.17"/>
    </reaction>
</comment>
<comment type="cofactor">
    <cofactor evidence="1">
        <name>FMN</name>
        <dbReference type="ChEBI" id="CHEBI:58210"/>
    </cofactor>
    <text evidence="1">Binds 1 FMN per subunit.</text>
</comment>
<comment type="subunit">
    <text evidence="1">Homodimer.</text>
</comment>
<comment type="similarity">
    <text evidence="1">Belongs to the azoreductase type 1 family.</text>
</comment>
<dbReference type="EC" id="1.6.5.-" evidence="1"/>
<dbReference type="EC" id="1.7.1.17" evidence="1"/>
<dbReference type="EMBL" id="AL591976">
    <property type="protein sequence ID" value="CAC98864.1"/>
    <property type="molecule type" value="Genomic_DNA"/>
</dbReference>
<dbReference type="PIR" id="AB1173">
    <property type="entry name" value="AB1173"/>
</dbReference>
<dbReference type="RefSeq" id="NP_464313.1">
    <property type="nucleotide sequence ID" value="NC_003210.1"/>
</dbReference>
<dbReference type="RefSeq" id="WP_003723799.1">
    <property type="nucleotide sequence ID" value="NZ_CP149495.1"/>
</dbReference>
<dbReference type="SMR" id="Q8Y8V6"/>
<dbReference type="STRING" id="169963.gene:17593437"/>
<dbReference type="PaxDb" id="169963-lmo0786"/>
<dbReference type="EnsemblBacteria" id="CAC98864">
    <property type="protein sequence ID" value="CAC98864"/>
    <property type="gene ID" value="CAC98864"/>
</dbReference>
<dbReference type="GeneID" id="985450"/>
<dbReference type="KEGG" id="lmo:lmo0786"/>
<dbReference type="PATRIC" id="fig|169963.11.peg.809"/>
<dbReference type="eggNOG" id="COG1182">
    <property type="taxonomic scope" value="Bacteria"/>
</dbReference>
<dbReference type="HOGENOM" id="CLU_088964_3_1_9"/>
<dbReference type="OrthoDB" id="9805013at2"/>
<dbReference type="PhylomeDB" id="Q8Y8V6"/>
<dbReference type="BioCyc" id="LMON169963:LMO0786-MONOMER"/>
<dbReference type="Proteomes" id="UP000000817">
    <property type="component" value="Chromosome"/>
</dbReference>
<dbReference type="GO" id="GO:0009055">
    <property type="term" value="F:electron transfer activity"/>
    <property type="evidence" value="ECO:0007669"/>
    <property type="project" value="UniProtKB-UniRule"/>
</dbReference>
<dbReference type="GO" id="GO:0010181">
    <property type="term" value="F:FMN binding"/>
    <property type="evidence" value="ECO:0007669"/>
    <property type="project" value="UniProtKB-UniRule"/>
</dbReference>
<dbReference type="GO" id="GO:0016652">
    <property type="term" value="F:oxidoreductase activity, acting on NAD(P)H as acceptor"/>
    <property type="evidence" value="ECO:0007669"/>
    <property type="project" value="UniProtKB-UniRule"/>
</dbReference>
<dbReference type="GO" id="GO:0016655">
    <property type="term" value="F:oxidoreductase activity, acting on NAD(P)H, quinone or similar compound as acceptor"/>
    <property type="evidence" value="ECO:0007669"/>
    <property type="project" value="InterPro"/>
</dbReference>
<dbReference type="FunFam" id="3.40.50.360:FF:000055">
    <property type="entry name" value="FMN-dependent NADH-azoreductase 2"/>
    <property type="match status" value="1"/>
</dbReference>
<dbReference type="Gene3D" id="3.40.50.360">
    <property type="match status" value="1"/>
</dbReference>
<dbReference type="HAMAP" id="MF_01216">
    <property type="entry name" value="Azoreductase_type1"/>
    <property type="match status" value="1"/>
</dbReference>
<dbReference type="InterPro" id="IPR003680">
    <property type="entry name" value="Flavodoxin_fold"/>
</dbReference>
<dbReference type="InterPro" id="IPR029039">
    <property type="entry name" value="Flavoprotein-like_sf"/>
</dbReference>
<dbReference type="InterPro" id="IPR050104">
    <property type="entry name" value="FMN-dep_NADH:Q_OxRdtase_AzoR1"/>
</dbReference>
<dbReference type="InterPro" id="IPR023048">
    <property type="entry name" value="NADH:quinone_OxRdtase_FMN_depd"/>
</dbReference>
<dbReference type="PANTHER" id="PTHR43741">
    <property type="entry name" value="FMN-DEPENDENT NADH-AZOREDUCTASE 1"/>
    <property type="match status" value="1"/>
</dbReference>
<dbReference type="PANTHER" id="PTHR43741:SF7">
    <property type="entry name" value="FMN-DEPENDENT NADH:QUINONE OXIDOREDUCTASE"/>
    <property type="match status" value="1"/>
</dbReference>
<dbReference type="Pfam" id="PF02525">
    <property type="entry name" value="Flavodoxin_2"/>
    <property type="match status" value="1"/>
</dbReference>
<dbReference type="SUPFAM" id="SSF52218">
    <property type="entry name" value="Flavoproteins"/>
    <property type="match status" value="1"/>
</dbReference>
<name>AZOR2_LISMO</name>
<protein>
    <recommendedName>
        <fullName evidence="1">FMN-dependent NADH:quinone oxidoreductase 2</fullName>
        <ecNumber evidence="1">1.6.5.-</ecNumber>
    </recommendedName>
    <alternativeName>
        <fullName evidence="1">Azo-dye reductase 2</fullName>
    </alternativeName>
    <alternativeName>
        <fullName evidence="1">FMN-dependent NADH-azo compound oxidoreductase 2</fullName>
    </alternativeName>
    <alternativeName>
        <fullName evidence="1">FMN-dependent NADH-azoreductase 2</fullName>
        <ecNumber evidence="1">1.7.1.17</ecNumber>
    </alternativeName>
</protein>